<gene>
    <name evidence="1" type="primary">rppH</name>
    <name evidence="1" type="synonym">nudH</name>
    <name type="ordered locus">RAF_ORF0297</name>
</gene>
<accession>C3PMT3</accession>
<name>RPPH_RICAE</name>
<protein>
    <recommendedName>
        <fullName evidence="1">RNA pyrophosphohydrolase</fullName>
        <ecNumber evidence="1">3.6.1.-</ecNumber>
    </recommendedName>
    <alternativeName>
        <fullName evidence="1">(Di)nucleoside polyphosphate hydrolase</fullName>
    </alternativeName>
</protein>
<keyword id="KW-0378">Hydrolase</keyword>
<keyword id="KW-0479">Metal-binding</keyword>
<organism>
    <name type="scientific">Rickettsia africae (strain ESF-5)</name>
    <dbReference type="NCBI Taxonomy" id="347255"/>
    <lineage>
        <taxon>Bacteria</taxon>
        <taxon>Pseudomonadati</taxon>
        <taxon>Pseudomonadota</taxon>
        <taxon>Alphaproteobacteria</taxon>
        <taxon>Rickettsiales</taxon>
        <taxon>Rickettsiaceae</taxon>
        <taxon>Rickettsieae</taxon>
        <taxon>Rickettsia</taxon>
        <taxon>spotted fever group</taxon>
    </lineage>
</organism>
<proteinExistence type="inferred from homology"/>
<feature type="chain" id="PRO_1000204938" description="RNA pyrophosphohydrolase">
    <location>
        <begin position="1"/>
        <end position="161"/>
    </location>
</feature>
<feature type="domain" description="Nudix hydrolase" evidence="1">
    <location>
        <begin position="12"/>
        <end position="154"/>
    </location>
</feature>
<feature type="short sequence motif" description="Nudix box">
    <location>
        <begin position="46"/>
        <end position="67"/>
    </location>
</feature>
<sequence length="161" mass="18692">MSNSSKKHFDLPYRPGVGMMILNADNHIFVGKRIDTKISAWQMPQGGIVPGETPSIAAMREMLEEIGSDKGYIIAESKFWYSYDVPSFLIPKLWNGNFRGQQQRWFLIRFTGNNEDININTSNPEFDQWRWASLDELLSIIIPFKRKLYQAVVKEFESLIQ</sequence>
<evidence type="ECO:0000255" key="1">
    <source>
        <dbReference type="HAMAP-Rule" id="MF_00298"/>
    </source>
</evidence>
<comment type="function">
    <text evidence="1">Accelerates the degradation of transcripts by removing pyrophosphate from the 5'-end of triphosphorylated RNA, leading to a more labile monophosphorylated state that can stimulate subsequent ribonuclease cleavage.</text>
</comment>
<comment type="cofactor">
    <cofactor evidence="1">
        <name>a divalent metal cation</name>
        <dbReference type="ChEBI" id="CHEBI:60240"/>
    </cofactor>
</comment>
<comment type="similarity">
    <text evidence="1">Belongs to the Nudix hydrolase family. RppH subfamily.</text>
</comment>
<dbReference type="EC" id="3.6.1.-" evidence="1"/>
<dbReference type="EMBL" id="CP001612">
    <property type="protein sequence ID" value="ACP53243.1"/>
    <property type="molecule type" value="Genomic_DNA"/>
</dbReference>
<dbReference type="RefSeq" id="WP_012719499.1">
    <property type="nucleotide sequence ID" value="NC_012633.1"/>
</dbReference>
<dbReference type="SMR" id="C3PMT3"/>
<dbReference type="KEGG" id="raf:RAF_ORF0297"/>
<dbReference type="HOGENOM" id="CLU_087195_3_0_5"/>
<dbReference type="Proteomes" id="UP000002305">
    <property type="component" value="Chromosome"/>
</dbReference>
<dbReference type="GO" id="GO:0005737">
    <property type="term" value="C:cytoplasm"/>
    <property type="evidence" value="ECO:0007669"/>
    <property type="project" value="TreeGrafter"/>
</dbReference>
<dbReference type="GO" id="GO:0046872">
    <property type="term" value="F:metal ion binding"/>
    <property type="evidence" value="ECO:0007669"/>
    <property type="project" value="UniProtKB-KW"/>
</dbReference>
<dbReference type="GO" id="GO:0034353">
    <property type="term" value="F:mRNA 5'-diphosphatase activity"/>
    <property type="evidence" value="ECO:0007669"/>
    <property type="project" value="TreeGrafter"/>
</dbReference>
<dbReference type="GO" id="GO:0006402">
    <property type="term" value="P:mRNA catabolic process"/>
    <property type="evidence" value="ECO:0007669"/>
    <property type="project" value="TreeGrafter"/>
</dbReference>
<dbReference type="CDD" id="cd03671">
    <property type="entry name" value="NUDIX_Ap4A_hydrolase_plant_like"/>
    <property type="match status" value="1"/>
</dbReference>
<dbReference type="Gene3D" id="3.90.79.10">
    <property type="entry name" value="Nucleoside Triphosphate Pyrophosphohydrolase"/>
    <property type="match status" value="1"/>
</dbReference>
<dbReference type="HAMAP" id="MF_00298">
    <property type="entry name" value="Nudix_RppH"/>
    <property type="match status" value="1"/>
</dbReference>
<dbReference type="InterPro" id="IPR015797">
    <property type="entry name" value="NUDIX_hydrolase-like_dom_sf"/>
</dbReference>
<dbReference type="InterPro" id="IPR020084">
    <property type="entry name" value="NUDIX_hydrolase_CS"/>
</dbReference>
<dbReference type="InterPro" id="IPR000086">
    <property type="entry name" value="NUDIX_hydrolase_dom"/>
</dbReference>
<dbReference type="InterPro" id="IPR022927">
    <property type="entry name" value="RppH"/>
</dbReference>
<dbReference type="NCBIfam" id="NF001936">
    <property type="entry name" value="PRK00714.1-3"/>
    <property type="match status" value="1"/>
</dbReference>
<dbReference type="NCBIfam" id="NF001938">
    <property type="entry name" value="PRK00714.1-5"/>
    <property type="match status" value="1"/>
</dbReference>
<dbReference type="PANTHER" id="PTHR23114">
    <property type="entry name" value="M7GPPPN-MRNA HYDROLASE"/>
    <property type="match status" value="1"/>
</dbReference>
<dbReference type="PANTHER" id="PTHR23114:SF17">
    <property type="entry name" value="M7GPPPN-MRNA HYDROLASE"/>
    <property type="match status" value="1"/>
</dbReference>
<dbReference type="Pfam" id="PF00293">
    <property type="entry name" value="NUDIX"/>
    <property type="match status" value="1"/>
</dbReference>
<dbReference type="SUPFAM" id="SSF55811">
    <property type="entry name" value="Nudix"/>
    <property type="match status" value="1"/>
</dbReference>
<dbReference type="PROSITE" id="PS51462">
    <property type="entry name" value="NUDIX"/>
    <property type="match status" value="1"/>
</dbReference>
<dbReference type="PROSITE" id="PS00893">
    <property type="entry name" value="NUDIX_BOX"/>
    <property type="match status" value="1"/>
</dbReference>
<reference key="1">
    <citation type="journal article" date="2009" name="BMC Genomics">
        <title>Analysis of the Rickettsia africae genome reveals that virulence acquisition in Rickettsia species may be explained by genome reduction.</title>
        <authorList>
            <person name="Fournier P.-E."/>
            <person name="El Karkouri K."/>
            <person name="Leroy Q."/>
            <person name="Robert C."/>
            <person name="Giumelli B."/>
            <person name="Renesto P."/>
            <person name="Socolovschi C."/>
            <person name="Parola P."/>
            <person name="Audic S."/>
            <person name="Raoult D."/>
        </authorList>
    </citation>
    <scope>NUCLEOTIDE SEQUENCE [LARGE SCALE GENOMIC DNA]</scope>
    <source>
        <strain>ESF-5</strain>
    </source>
</reference>